<protein>
    <recommendedName>
        <fullName evidence="1">Small ribosomal subunit protein uS14</fullName>
    </recommendedName>
    <alternativeName>
        <fullName evidence="2">30S ribosomal protein S14</fullName>
    </alternativeName>
</protein>
<keyword id="KW-0687">Ribonucleoprotein</keyword>
<keyword id="KW-0689">Ribosomal protein</keyword>
<keyword id="KW-0694">RNA-binding</keyword>
<keyword id="KW-0699">rRNA-binding</keyword>
<feature type="chain" id="PRO_1000128321" description="Small ribosomal subunit protein uS14">
    <location>
        <begin position="1"/>
        <end position="101"/>
    </location>
</feature>
<proteinExistence type="inferred from homology"/>
<gene>
    <name evidence="1" type="primary">rpsN</name>
    <name type="ordered locus">BruAb1_1225</name>
</gene>
<sequence length="101" mass="11666">MAKTSAVEKNKRREKLVKRHAVKRARLKAIVMDQGLPLEERFRATIRLAELPRNSAKVRIRNRCEVSGRPRGYYRKLKMSRIALRQLGSLGQIPGVVKSSW</sequence>
<evidence type="ECO:0000255" key="1">
    <source>
        <dbReference type="HAMAP-Rule" id="MF_00537"/>
    </source>
</evidence>
<evidence type="ECO:0000305" key="2"/>
<organism>
    <name type="scientific">Brucella abortus biovar 1 (strain 9-941)</name>
    <dbReference type="NCBI Taxonomy" id="262698"/>
    <lineage>
        <taxon>Bacteria</taxon>
        <taxon>Pseudomonadati</taxon>
        <taxon>Pseudomonadota</taxon>
        <taxon>Alphaproteobacteria</taxon>
        <taxon>Hyphomicrobiales</taxon>
        <taxon>Brucellaceae</taxon>
        <taxon>Brucella/Ochrobactrum group</taxon>
        <taxon>Brucella</taxon>
    </lineage>
</organism>
<dbReference type="EMBL" id="AE017223">
    <property type="protein sequence ID" value="AAX74563.1"/>
    <property type="molecule type" value="Genomic_DNA"/>
</dbReference>
<dbReference type="RefSeq" id="WP_002964349.1">
    <property type="nucleotide sequence ID" value="NC_006932.1"/>
</dbReference>
<dbReference type="SMR" id="Q57CS1"/>
<dbReference type="EnsemblBacteria" id="AAX74563">
    <property type="protein sequence ID" value="AAX74563"/>
    <property type="gene ID" value="BruAb1_1225"/>
</dbReference>
<dbReference type="GeneID" id="97533537"/>
<dbReference type="KEGG" id="bmb:BruAb1_1225"/>
<dbReference type="HOGENOM" id="CLU_139869_0_1_5"/>
<dbReference type="Proteomes" id="UP000000540">
    <property type="component" value="Chromosome I"/>
</dbReference>
<dbReference type="GO" id="GO:0005737">
    <property type="term" value="C:cytoplasm"/>
    <property type="evidence" value="ECO:0007669"/>
    <property type="project" value="UniProtKB-ARBA"/>
</dbReference>
<dbReference type="GO" id="GO:0015935">
    <property type="term" value="C:small ribosomal subunit"/>
    <property type="evidence" value="ECO:0007669"/>
    <property type="project" value="TreeGrafter"/>
</dbReference>
<dbReference type="GO" id="GO:0019843">
    <property type="term" value="F:rRNA binding"/>
    <property type="evidence" value="ECO:0007669"/>
    <property type="project" value="UniProtKB-UniRule"/>
</dbReference>
<dbReference type="GO" id="GO:0003735">
    <property type="term" value="F:structural constituent of ribosome"/>
    <property type="evidence" value="ECO:0007669"/>
    <property type="project" value="InterPro"/>
</dbReference>
<dbReference type="GO" id="GO:0006412">
    <property type="term" value="P:translation"/>
    <property type="evidence" value="ECO:0007669"/>
    <property type="project" value="UniProtKB-UniRule"/>
</dbReference>
<dbReference type="FunFam" id="1.10.287.1480:FF:000001">
    <property type="entry name" value="30S ribosomal protein S14"/>
    <property type="match status" value="1"/>
</dbReference>
<dbReference type="Gene3D" id="1.10.287.1480">
    <property type="match status" value="1"/>
</dbReference>
<dbReference type="HAMAP" id="MF_00537">
    <property type="entry name" value="Ribosomal_uS14_1"/>
    <property type="match status" value="1"/>
</dbReference>
<dbReference type="InterPro" id="IPR001209">
    <property type="entry name" value="Ribosomal_uS14"/>
</dbReference>
<dbReference type="InterPro" id="IPR023036">
    <property type="entry name" value="Ribosomal_uS14_bac/plastid"/>
</dbReference>
<dbReference type="InterPro" id="IPR018271">
    <property type="entry name" value="Ribosomal_uS14_CS"/>
</dbReference>
<dbReference type="NCBIfam" id="NF006477">
    <property type="entry name" value="PRK08881.1"/>
    <property type="match status" value="1"/>
</dbReference>
<dbReference type="PANTHER" id="PTHR19836">
    <property type="entry name" value="30S RIBOSOMAL PROTEIN S14"/>
    <property type="match status" value="1"/>
</dbReference>
<dbReference type="PANTHER" id="PTHR19836:SF19">
    <property type="entry name" value="SMALL RIBOSOMAL SUBUNIT PROTEIN US14M"/>
    <property type="match status" value="1"/>
</dbReference>
<dbReference type="Pfam" id="PF00253">
    <property type="entry name" value="Ribosomal_S14"/>
    <property type="match status" value="1"/>
</dbReference>
<dbReference type="SUPFAM" id="SSF57716">
    <property type="entry name" value="Glucocorticoid receptor-like (DNA-binding domain)"/>
    <property type="match status" value="1"/>
</dbReference>
<dbReference type="PROSITE" id="PS00527">
    <property type="entry name" value="RIBOSOMAL_S14"/>
    <property type="match status" value="1"/>
</dbReference>
<reference key="1">
    <citation type="journal article" date="2005" name="J. Bacteriol.">
        <title>Completion of the genome sequence of Brucella abortus and comparison to the highly similar genomes of Brucella melitensis and Brucella suis.</title>
        <authorList>
            <person name="Halling S.M."/>
            <person name="Peterson-Burch B.D."/>
            <person name="Bricker B.J."/>
            <person name="Zuerner R.L."/>
            <person name="Qing Z."/>
            <person name="Li L.-L."/>
            <person name="Kapur V."/>
            <person name="Alt D.P."/>
            <person name="Olsen S.C."/>
        </authorList>
    </citation>
    <scope>NUCLEOTIDE SEQUENCE [LARGE SCALE GENOMIC DNA]</scope>
    <source>
        <strain>9-941</strain>
    </source>
</reference>
<name>RS14_BRUAB</name>
<accession>Q57CS1</accession>
<comment type="function">
    <text evidence="1">Binds 16S rRNA, required for the assembly of 30S particles and may also be responsible for determining the conformation of the 16S rRNA at the A site.</text>
</comment>
<comment type="subunit">
    <text evidence="1">Part of the 30S ribosomal subunit. Contacts proteins S3 and S10.</text>
</comment>
<comment type="similarity">
    <text evidence="1">Belongs to the universal ribosomal protein uS14 family.</text>
</comment>